<reference key="1">
    <citation type="journal article" date="2006" name="J. Bacteriol.">
        <title>Chromosome rearrangement and diversification of Francisella tularensis revealed by the type B (OSU18) genome sequence.</title>
        <authorList>
            <person name="Petrosino J.F."/>
            <person name="Xiang Q."/>
            <person name="Karpathy S.E."/>
            <person name="Jiang H."/>
            <person name="Yerrapragada S."/>
            <person name="Liu Y."/>
            <person name="Gioia J."/>
            <person name="Hemphill L."/>
            <person name="Gonzalez A."/>
            <person name="Raghavan T.M."/>
            <person name="Uzman A."/>
            <person name="Fox G.E."/>
            <person name="Highlander S."/>
            <person name="Reichard M."/>
            <person name="Morton R.J."/>
            <person name="Clinkenbeard K.D."/>
            <person name="Weinstock G.M."/>
        </authorList>
    </citation>
    <scope>NUCLEOTIDE SEQUENCE [LARGE SCALE GENOMIC DNA]</scope>
    <source>
        <strain>OSU18</strain>
    </source>
</reference>
<organism>
    <name type="scientific">Francisella tularensis subsp. holarctica (strain OSU18)</name>
    <dbReference type="NCBI Taxonomy" id="393011"/>
    <lineage>
        <taxon>Bacteria</taxon>
        <taxon>Pseudomonadati</taxon>
        <taxon>Pseudomonadota</taxon>
        <taxon>Gammaproteobacteria</taxon>
        <taxon>Thiotrichales</taxon>
        <taxon>Francisellaceae</taxon>
        <taxon>Francisella</taxon>
    </lineage>
</organism>
<comment type="function">
    <text evidence="1">Excises uracil residues from the DNA which can arise as a result of misincorporation of dUMP residues by DNA polymerase or due to deamination of cytosine.</text>
</comment>
<comment type="catalytic activity">
    <reaction evidence="1">
        <text>Hydrolyzes single-stranded DNA or mismatched double-stranded DNA and polynucleotides, releasing free uracil.</text>
        <dbReference type="EC" id="3.2.2.27"/>
    </reaction>
</comment>
<comment type="subcellular location">
    <subcellularLocation>
        <location evidence="1">Cytoplasm</location>
    </subcellularLocation>
</comment>
<comment type="similarity">
    <text evidence="1">Belongs to the uracil-DNA glycosylase (UDG) superfamily. UNG family.</text>
</comment>
<keyword id="KW-0963">Cytoplasm</keyword>
<keyword id="KW-0227">DNA damage</keyword>
<keyword id="KW-0234">DNA repair</keyword>
<keyword id="KW-0378">Hydrolase</keyword>
<evidence type="ECO:0000255" key="1">
    <source>
        <dbReference type="HAMAP-Rule" id="MF_00148"/>
    </source>
</evidence>
<accession>Q0BN28</accession>
<protein>
    <recommendedName>
        <fullName evidence="1">Uracil-DNA glycosylase</fullName>
        <shortName evidence="1">UDG</shortName>
        <ecNumber evidence="1">3.2.2.27</ecNumber>
    </recommendedName>
</protein>
<feature type="chain" id="PRO_1000009892" description="Uracil-DNA glycosylase">
    <location>
        <begin position="1"/>
        <end position="220"/>
    </location>
</feature>
<feature type="active site" description="Proton acceptor" evidence="1">
    <location>
        <position position="60"/>
    </location>
</feature>
<dbReference type="EC" id="3.2.2.27" evidence="1"/>
<dbReference type="EMBL" id="CP000437">
    <property type="protein sequence ID" value="ABI82506.1"/>
    <property type="molecule type" value="Genomic_DNA"/>
</dbReference>
<dbReference type="RefSeq" id="WP_003014844.1">
    <property type="nucleotide sequence ID" value="NC_017463.1"/>
</dbReference>
<dbReference type="SMR" id="Q0BN28"/>
<dbReference type="KEGG" id="fth:FTH_0532"/>
<dbReference type="GO" id="GO:0005737">
    <property type="term" value="C:cytoplasm"/>
    <property type="evidence" value="ECO:0007669"/>
    <property type="project" value="UniProtKB-SubCell"/>
</dbReference>
<dbReference type="GO" id="GO:0004844">
    <property type="term" value="F:uracil DNA N-glycosylase activity"/>
    <property type="evidence" value="ECO:0007669"/>
    <property type="project" value="UniProtKB-UniRule"/>
</dbReference>
<dbReference type="GO" id="GO:0097510">
    <property type="term" value="P:base-excision repair, AP site formation via deaminated base removal"/>
    <property type="evidence" value="ECO:0007669"/>
    <property type="project" value="TreeGrafter"/>
</dbReference>
<dbReference type="CDD" id="cd10027">
    <property type="entry name" value="UDG-F1-like"/>
    <property type="match status" value="1"/>
</dbReference>
<dbReference type="FunFam" id="3.40.470.10:FF:000001">
    <property type="entry name" value="Uracil-DNA glycosylase"/>
    <property type="match status" value="1"/>
</dbReference>
<dbReference type="Gene3D" id="3.40.470.10">
    <property type="entry name" value="Uracil-DNA glycosylase-like domain"/>
    <property type="match status" value="1"/>
</dbReference>
<dbReference type="HAMAP" id="MF_00148">
    <property type="entry name" value="UDG"/>
    <property type="match status" value="1"/>
</dbReference>
<dbReference type="InterPro" id="IPR002043">
    <property type="entry name" value="UDG_fam1"/>
</dbReference>
<dbReference type="InterPro" id="IPR018085">
    <property type="entry name" value="Ura-DNA_Glyclase_AS"/>
</dbReference>
<dbReference type="InterPro" id="IPR005122">
    <property type="entry name" value="Uracil-DNA_glycosylase-like"/>
</dbReference>
<dbReference type="InterPro" id="IPR036895">
    <property type="entry name" value="Uracil-DNA_glycosylase-like_sf"/>
</dbReference>
<dbReference type="NCBIfam" id="NF003588">
    <property type="entry name" value="PRK05254.1-1"/>
    <property type="match status" value="1"/>
</dbReference>
<dbReference type="NCBIfam" id="NF003589">
    <property type="entry name" value="PRK05254.1-2"/>
    <property type="match status" value="1"/>
</dbReference>
<dbReference type="NCBIfam" id="NF003591">
    <property type="entry name" value="PRK05254.1-4"/>
    <property type="match status" value="1"/>
</dbReference>
<dbReference type="NCBIfam" id="NF003592">
    <property type="entry name" value="PRK05254.1-5"/>
    <property type="match status" value="1"/>
</dbReference>
<dbReference type="NCBIfam" id="TIGR00628">
    <property type="entry name" value="ung"/>
    <property type="match status" value="1"/>
</dbReference>
<dbReference type="PANTHER" id="PTHR11264">
    <property type="entry name" value="URACIL-DNA GLYCOSYLASE"/>
    <property type="match status" value="1"/>
</dbReference>
<dbReference type="PANTHER" id="PTHR11264:SF0">
    <property type="entry name" value="URACIL-DNA GLYCOSYLASE"/>
    <property type="match status" value="1"/>
</dbReference>
<dbReference type="Pfam" id="PF03167">
    <property type="entry name" value="UDG"/>
    <property type="match status" value="1"/>
</dbReference>
<dbReference type="SMART" id="SM00986">
    <property type="entry name" value="UDG"/>
    <property type="match status" value="1"/>
</dbReference>
<dbReference type="SMART" id="SM00987">
    <property type="entry name" value="UreE_C"/>
    <property type="match status" value="1"/>
</dbReference>
<dbReference type="SUPFAM" id="SSF52141">
    <property type="entry name" value="Uracil-DNA glycosylase-like"/>
    <property type="match status" value="1"/>
</dbReference>
<dbReference type="PROSITE" id="PS00130">
    <property type="entry name" value="U_DNA_GLYCOSYLASE"/>
    <property type="match status" value="1"/>
</dbReference>
<proteinExistence type="inferred from homology"/>
<sequence length="220" mass="25426">MTWSDILAEEKQKPYFKQILDFLACESAKGKVIFPTKENIFNAFKYTELDNLKVVILGQDPYHNYNQAHGLAFSVQKWVDIPPSLQNIYKELARSIPKFKTPNHGYLVDWAKQGVFLLNTTLTVEAHKANSHKDIGWETFTDTVINKISENKHNVVFMLWGSHARKKKVLIDSSRHLILESTHPSPLSAHRGFLGCNHFVDCNKYLIEKKDQKIDWNLLC</sequence>
<name>UNG_FRATO</name>
<gene>
    <name evidence="1" type="primary">ung</name>
    <name type="ordered locus">FTH_0532</name>
</gene>